<reference key="1">
    <citation type="journal article" date="2003" name="Genome Res.">
        <title>Comparative genome analysis of Vibrio vulnificus, a marine pathogen.</title>
        <authorList>
            <person name="Chen C.-Y."/>
            <person name="Wu K.-M."/>
            <person name="Chang Y.-C."/>
            <person name="Chang C.-H."/>
            <person name="Tsai H.-C."/>
            <person name="Liao T.-L."/>
            <person name="Liu Y.-M."/>
            <person name="Chen H.-J."/>
            <person name="Shen A.B.-T."/>
            <person name="Li J.-C."/>
            <person name="Su T.-L."/>
            <person name="Shao C.-P."/>
            <person name="Lee C.-T."/>
            <person name="Hor L.-I."/>
            <person name="Tsai S.-F."/>
        </authorList>
    </citation>
    <scope>NUCLEOTIDE SEQUENCE [LARGE SCALE GENOMIC DNA]</scope>
    <source>
        <strain>YJ016</strain>
    </source>
</reference>
<evidence type="ECO:0000255" key="1">
    <source>
        <dbReference type="HAMAP-Rule" id="MF_00206"/>
    </source>
</evidence>
<evidence type="ECO:0000255" key="2">
    <source>
        <dbReference type="PROSITE-ProRule" id="PRU01266"/>
    </source>
</evidence>
<comment type="function">
    <text evidence="1">Catalyzes the radical-mediated insertion of two sulfur atoms into the C-6 and C-8 positions of the octanoyl moiety bound to the lipoyl domains of lipoate-dependent enzymes, thereby converting the octanoylated domains into lipoylated derivatives.</text>
</comment>
<comment type="catalytic activity">
    <reaction evidence="1">
        <text>[[Fe-S] cluster scaffold protein carrying a second [4Fe-4S](2+) cluster] + N(6)-octanoyl-L-lysyl-[protein] + 2 oxidized [2Fe-2S]-[ferredoxin] + 2 S-adenosyl-L-methionine + 4 H(+) = [[Fe-S] cluster scaffold protein] + N(6)-[(R)-dihydrolipoyl]-L-lysyl-[protein] + 4 Fe(3+) + 2 hydrogen sulfide + 2 5'-deoxyadenosine + 2 L-methionine + 2 reduced [2Fe-2S]-[ferredoxin]</text>
        <dbReference type="Rhea" id="RHEA:16585"/>
        <dbReference type="Rhea" id="RHEA-COMP:9928"/>
        <dbReference type="Rhea" id="RHEA-COMP:10000"/>
        <dbReference type="Rhea" id="RHEA-COMP:10001"/>
        <dbReference type="Rhea" id="RHEA-COMP:10475"/>
        <dbReference type="Rhea" id="RHEA-COMP:14568"/>
        <dbReference type="Rhea" id="RHEA-COMP:14569"/>
        <dbReference type="ChEBI" id="CHEBI:15378"/>
        <dbReference type="ChEBI" id="CHEBI:17319"/>
        <dbReference type="ChEBI" id="CHEBI:29034"/>
        <dbReference type="ChEBI" id="CHEBI:29919"/>
        <dbReference type="ChEBI" id="CHEBI:33722"/>
        <dbReference type="ChEBI" id="CHEBI:33737"/>
        <dbReference type="ChEBI" id="CHEBI:33738"/>
        <dbReference type="ChEBI" id="CHEBI:57844"/>
        <dbReference type="ChEBI" id="CHEBI:59789"/>
        <dbReference type="ChEBI" id="CHEBI:78809"/>
        <dbReference type="ChEBI" id="CHEBI:83100"/>
        <dbReference type="EC" id="2.8.1.8"/>
    </reaction>
</comment>
<comment type="cofactor">
    <cofactor evidence="1">
        <name>[4Fe-4S] cluster</name>
        <dbReference type="ChEBI" id="CHEBI:49883"/>
    </cofactor>
    <text evidence="1">Binds 2 [4Fe-4S] clusters per subunit. One cluster is coordinated with 3 cysteines and an exchangeable S-adenosyl-L-methionine.</text>
</comment>
<comment type="pathway">
    <text evidence="1">Protein modification; protein lipoylation via endogenous pathway; protein N(6)-(lipoyl)lysine from octanoyl-[acyl-carrier-protein]: step 2/2.</text>
</comment>
<comment type="subcellular location">
    <subcellularLocation>
        <location evidence="1">Cytoplasm</location>
    </subcellularLocation>
</comment>
<comment type="similarity">
    <text evidence="1">Belongs to the radical SAM superfamily. Lipoyl synthase family.</text>
</comment>
<proteinExistence type="inferred from homology"/>
<sequence>MSKPIQMEKGVKYRDADKMALIPVKNMPTEQKEVLRKPDWMKIKLPADSQRIQDIKSAMRKNNLHSVCEEASCPNLAECFNHGTATFMILGAICTRRCPFCDVAHGRPLPPEAEEPTKLAKTIADMKLKYVVITSVDRDDLRDGGAKHFADCNREIRAQSPHIRIETLVPDFRGRMDVALEALKDNPPDVFNHNLETAPRLYRKVRPGANYQWSLDLLKKFKEQHPDVPTKSGLMMGLGETKEEIVEVLKDLRAHGVTMLTLGQYLAPSRHHLPVERYVPPAEFDELKEIALELGFTHAACGPFVRSSYHADMQAQGLEVK</sequence>
<organism>
    <name type="scientific">Vibrio vulnificus (strain YJ016)</name>
    <dbReference type="NCBI Taxonomy" id="196600"/>
    <lineage>
        <taxon>Bacteria</taxon>
        <taxon>Pseudomonadati</taxon>
        <taxon>Pseudomonadota</taxon>
        <taxon>Gammaproteobacteria</taxon>
        <taxon>Vibrionales</taxon>
        <taxon>Vibrionaceae</taxon>
        <taxon>Vibrio</taxon>
    </lineage>
</organism>
<gene>
    <name evidence="1" type="primary">lipA</name>
    <name type="ordered locus">VV0900</name>
</gene>
<protein>
    <recommendedName>
        <fullName evidence="1">Lipoyl synthase</fullName>
        <ecNumber evidence="1">2.8.1.8</ecNumber>
    </recommendedName>
    <alternativeName>
        <fullName evidence="1">Lip-syn</fullName>
        <shortName evidence="1">LS</shortName>
    </alternativeName>
    <alternativeName>
        <fullName evidence="1">Lipoate synthase</fullName>
    </alternativeName>
    <alternativeName>
        <fullName evidence="1">Lipoic acid synthase</fullName>
    </alternativeName>
    <alternativeName>
        <fullName evidence="1">Sulfur insertion protein LipA</fullName>
    </alternativeName>
</protein>
<name>LIPA_VIBVY</name>
<feature type="chain" id="PRO_0000102380" description="Lipoyl synthase">
    <location>
        <begin position="1"/>
        <end position="321"/>
    </location>
</feature>
<feature type="domain" description="Radical SAM core" evidence="2">
    <location>
        <begin position="80"/>
        <end position="297"/>
    </location>
</feature>
<feature type="binding site" evidence="1">
    <location>
        <position position="68"/>
    </location>
    <ligand>
        <name>[4Fe-4S] cluster</name>
        <dbReference type="ChEBI" id="CHEBI:49883"/>
        <label>1</label>
    </ligand>
</feature>
<feature type="binding site" evidence="1">
    <location>
        <position position="73"/>
    </location>
    <ligand>
        <name>[4Fe-4S] cluster</name>
        <dbReference type="ChEBI" id="CHEBI:49883"/>
        <label>1</label>
    </ligand>
</feature>
<feature type="binding site" evidence="1">
    <location>
        <position position="79"/>
    </location>
    <ligand>
        <name>[4Fe-4S] cluster</name>
        <dbReference type="ChEBI" id="CHEBI:49883"/>
        <label>1</label>
    </ligand>
</feature>
<feature type="binding site" evidence="1">
    <location>
        <position position="94"/>
    </location>
    <ligand>
        <name>[4Fe-4S] cluster</name>
        <dbReference type="ChEBI" id="CHEBI:49883"/>
        <label>2</label>
        <note>4Fe-4S-S-AdoMet</note>
    </ligand>
</feature>
<feature type="binding site" evidence="1">
    <location>
        <position position="98"/>
    </location>
    <ligand>
        <name>[4Fe-4S] cluster</name>
        <dbReference type="ChEBI" id="CHEBI:49883"/>
        <label>2</label>
        <note>4Fe-4S-S-AdoMet</note>
    </ligand>
</feature>
<feature type="binding site" evidence="1">
    <location>
        <position position="101"/>
    </location>
    <ligand>
        <name>[4Fe-4S] cluster</name>
        <dbReference type="ChEBI" id="CHEBI:49883"/>
        <label>2</label>
        <note>4Fe-4S-S-AdoMet</note>
    </ligand>
</feature>
<feature type="binding site" evidence="1">
    <location>
        <position position="308"/>
    </location>
    <ligand>
        <name>[4Fe-4S] cluster</name>
        <dbReference type="ChEBI" id="CHEBI:49883"/>
        <label>1</label>
    </ligand>
</feature>
<dbReference type="EC" id="2.8.1.8" evidence="1"/>
<dbReference type="EMBL" id="BA000037">
    <property type="protein sequence ID" value="BAC93664.1"/>
    <property type="molecule type" value="Genomic_DNA"/>
</dbReference>
<dbReference type="RefSeq" id="WP_011078392.1">
    <property type="nucleotide sequence ID" value="NC_005139.1"/>
</dbReference>
<dbReference type="SMR" id="Q7MN17"/>
<dbReference type="STRING" id="672.VV93_v1c08370"/>
<dbReference type="KEGG" id="vvy:VV0900"/>
<dbReference type="PATRIC" id="fig|196600.6.peg.904"/>
<dbReference type="eggNOG" id="COG0320">
    <property type="taxonomic scope" value="Bacteria"/>
</dbReference>
<dbReference type="HOGENOM" id="CLU_033144_2_1_6"/>
<dbReference type="UniPathway" id="UPA00538">
    <property type="reaction ID" value="UER00593"/>
</dbReference>
<dbReference type="Proteomes" id="UP000002675">
    <property type="component" value="Chromosome I"/>
</dbReference>
<dbReference type="GO" id="GO:0005737">
    <property type="term" value="C:cytoplasm"/>
    <property type="evidence" value="ECO:0007669"/>
    <property type="project" value="UniProtKB-SubCell"/>
</dbReference>
<dbReference type="GO" id="GO:0051539">
    <property type="term" value="F:4 iron, 4 sulfur cluster binding"/>
    <property type="evidence" value="ECO:0007669"/>
    <property type="project" value="UniProtKB-UniRule"/>
</dbReference>
<dbReference type="GO" id="GO:0016992">
    <property type="term" value="F:lipoate synthase activity"/>
    <property type="evidence" value="ECO:0007669"/>
    <property type="project" value="UniProtKB-UniRule"/>
</dbReference>
<dbReference type="GO" id="GO:0046872">
    <property type="term" value="F:metal ion binding"/>
    <property type="evidence" value="ECO:0007669"/>
    <property type="project" value="UniProtKB-KW"/>
</dbReference>
<dbReference type="CDD" id="cd01335">
    <property type="entry name" value="Radical_SAM"/>
    <property type="match status" value="1"/>
</dbReference>
<dbReference type="FunFam" id="3.20.20.70:FF:000023">
    <property type="entry name" value="Lipoyl synthase"/>
    <property type="match status" value="1"/>
</dbReference>
<dbReference type="Gene3D" id="3.20.20.70">
    <property type="entry name" value="Aldolase class I"/>
    <property type="match status" value="1"/>
</dbReference>
<dbReference type="HAMAP" id="MF_00206">
    <property type="entry name" value="Lipoyl_synth"/>
    <property type="match status" value="1"/>
</dbReference>
<dbReference type="InterPro" id="IPR013785">
    <property type="entry name" value="Aldolase_TIM"/>
</dbReference>
<dbReference type="InterPro" id="IPR006638">
    <property type="entry name" value="Elp3/MiaA/NifB-like_rSAM"/>
</dbReference>
<dbReference type="InterPro" id="IPR031691">
    <property type="entry name" value="LIAS_N"/>
</dbReference>
<dbReference type="InterPro" id="IPR003698">
    <property type="entry name" value="Lipoyl_synth"/>
</dbReference>
<dbReference type="InterPro" id="IPR007197">
    <property type="entry name" value="rSAM"/>
</dbReference>
<dbReference type="NCBIfam" id="TIGR00510">
    <property type="entry name" value="lipA"/>
    <property type="match status" value="1"/>
</dbReference>
<dbReference type="NCBIfam" id="NF004019">
    <property type="entry name" value="PRK05481.1"/>
    <property type="match status" value="1"/>
</dbReference>
<dbReference type="NCBIfam" id="NF009544">
    <property type="entry name" value="PRK12928.1"/>
    <property type="match status" value="1"/>
</dbReference>
<dbReference type="PANTHER" id="PTHR10949">
    <property type="entry name" value="LIPOYL SYNTHASE"/>
    <property type="match status" value="1"/>
</dbReference>
<dbReference type="PANTHER" id="PTHR10949:SF0">
    <property type="entry name" value="LIPOYL SYNTHASE, MITOCHONDRIAL"/>
    <property type="match status" value="1"/>
</dbReference>
<dbReference type="Pfam" id="PF16881">
    <property type="entry name" value="LIAS_N"/>
    <property type="match status" value="1"/>
</dbReference>
<dbReference type="Pfam" id="PF04055">
    <property type="entry name" value="Radical_SAM"/>
    <property type="match status" value="1"/>
</dbReference>
<dbReference type="PIRSF" id="PIRSF005963">
    <property type="entry name" value="Lipoyl_synth"/>
    <property type="match status" value="1"/>
</dbReference>
<dbReference type="SFLD" id="SFLDF00271">
    <property type="entry name" value="lipoyl_synthase"/>
    <property type="match status" value="1"/>
</dbReference>
<dbReference type="SFLD" id="SFLDS00029">
    <property type="entry name" value="Radical_SAM"/>
    <property type="match status" value="1"/>
</dbReference>
<dbReference type="SMART" id="SM00729">
    <property type="entry name" value="Elp3"/>
    <property type="match status" value="1"/>
</dbReference>
<dbReference type="SUPFAM" id="SSF102114">
    <property type="entry name" value="Radical SAM enzymes"/>
    <property type="match status" value="1"/>
</dbReference>
<dbReference type="PROSITE" id="PS51918">
    <property type="entry name" value="RADICAL_SAM"/>
    <property type="match status" value="1"/>
</dbReference>
<accession>Q7MN17</accession>
<keyword id="KW-0004">4Fe-4S</keyword>
<keyword id="KW-0963">Cytoplasm</keyword>
<keyword id="KW-0408">Iron</keyword>
<keyword id="KW-0411">Iron-sulfur</keyword>
<keyword id="KW-0479">Metal-binding</keyword>
<keyword id="KW-0949">S-adenosyl-L-methionine</keyword>
<keyword id="KW-0808">Transferase</keyword>